<comment type="function">
    <text evidence="1">One of the early assembly proteins it binds 23S rRNA. One of the proteins that surrounds the polypeptide exit tunnel on the outside of the ribosome. Forms the main docking site for trigger factor binding to the ribosome.</text>
</comment>
<comment type="subunit">
    <text evidence="1">Part of the 50S ribosomal subunit. Contacts protein L29, and trigger factor when it is bound to the ribosome.</text>
</comment>
<comment type="similarity">
    <text evidence="1">Belongs to the universal ribosomal protein uL23 family.</text>
</comment>
<proteinExistence type="inferred from homology"/>
<sequence>MKDPRDVLKRPVITERSADLMTEKKYTFEVDVKANKTEVKDAVEQIFGVKVEKVNIMNYKGKFKRVGRYSGMTNKRRKAIVKLTEDSKEIEIFEA</sequence>
<accession>Q65PA5</accession>
<accession>Q62ZP4</accession>
<keyword id="KW-1185">Reference proteome</keyword>
<keyword id="KW-0687">Ribonucleoprotein</keyword>
<keyword id="KW-0689">Ribosomal protein</keyword>
<keyword id="KW-0694">RNA-binding</keyword>
<keyword id="KW-0699">rRNA-binding</keyword>
<dbReference type="EMBL" id="AE017333">
    <property type="protein sequence ID" value="AAU39109.1"/>
    <property type="molecule type" value="Genomic_DNA"/>
</dbReference>
<dbReference type="EMBL" id="CP000002">
    <property type="protein sequence ID" value="AAU21764.1"/>
    <property type="molecule type" value="Genomic_DNA"/>
</dbReference>
<dbReference type="RefSeq" id="WP_003178328.1">
    <property type="nucleotide sequence ID" value="NC_006322.1"/>
</dbReference>
<dbReference type="SMR" id="Q65PA5"/>
<dbReference type="STRING" id="279010.BL01050"/>
<dbReference type="GeneID" id="92858901"/>
<dbReference type="KEGG" id="bld:BLi00135"/>
<dbReference type="KEGG" id="bli:BL01050"/>
<dbReference type="eggNOG" id="COG0089">
    <property type="taxonomic scope" value="Bacteria"/>
</dbReference>
<dbReference type="HOGENOM" id="CLU_037562_3_2_9"/>
<dbReference type="Proteomes" id="UP000000606">
    <property type="component" value="Chromosome"/>
</dbReference>
<dbReference type="GO" id="GO:1990904">
    <property type="term" value="C:ribonucleoprotein complex"/>
    <property type="evidence" value="ECO:0007669"/>
    <property type="project" value="UniProtKB-KW"/>
</dbReference>
<dbReference type="GO" id="GO:0005840">
    <property type="term" value="C:ribosome"/>
    <property type="evidence" value="ECO:0007669"/>
    <property type="project" value="UniProtKB-KW"/>
</dbReference>
<dbReference type="GO" id="GO:0019843">
    <property type="term" value="F:rRNA binding"/>
    <property type="evidence" value="ECO:0007669"/>
    <property type="project" value="UniProtKB-UniRule"/>
</dbReference>
<dbReference type="GO" id="GO:0003735">
    <property type="term" value="F:structural constituent of ribosome"/>
    <property type="evidence" value="ECO:0007669"/>
    <property type="project" value="InterPro"/>
</dbReference>
<dbReference type="GO" id="GO:0006412">
    <property type="term" value="P:translation"/>
    <property type="evidence" value="ECO:0007669"/>
    <property type="project" value="UniProtKB-UniRule"/>
</dbReference>
<dbReference type="FunFam" id="3.30.70.330:FF:000001">
    <property type="entry name" value="50S ribosomal protein L23"/>
    <property type="match status" value="1"/>
</dbReference>
<dbReference type="Gene3D" id="3.30.70.330">
    <property type="match status" value="1"/>
</dbReference>
<dbReference type="HAMAP" id="MF_01369_B">
    <property type="entry name" value="Ribosomal_uL23_B"/>
    <property type="match status" value="1"/>
</dbReference>
<dbReference type="InterPro" id="IPR012677">
    <property type="entry name" value="Nucleotide-bd_a/b_plait_sf"/>
</dbReference>
<dbReference type="InterPro" id="IPR013025">
    <property type="entry name" value="Ribosomal_uL23-like"/>
</dbReference>
<dbReference type="InterPro" id="IPR012678">
    <property type="entry name" value="Ribosomal_uL23/eL15/eS24_sf"/>
</dbReference>
<dbReference type="InterPro" id="IPR001014">
    <property type="entry name" value="Ribosomal_uL23_CS"/>
</dbReference>
<dbReference type="NCBIfam" id="NF004363">
    <property type="entry name" value="PRK05738.2-4"/>
    <property type="match status" value="1"/>
</dbReference>
<dbReference type="PANTHER" id="PTHR11620">
    <property type="entry name" value="60S RIBOSOMAL PROTEIN L23A"/>
    <property type="match status" value="1"/>
</dbReference>
<dbReference type="Pfam" id="PF00276">
    <property type="entry name" value="Ribosomal_L23"/>
    <property type="match status" value="1"/>
</dbReference>
<dbReference type="SUPFAM" id="SSF54189">
    <property type="entry name" value="Ribosomal proteins S24e, L23 and L15e"/>
    <property type="match status" value="1"/>
</dbReference>
<dbReference type="PROSITE" id="PS00050">
    <property type="entry name" value="RIBOSOMAL_L23"/>
    <property type="match status" value="1"/>
</dbReference>
<reference key="1">
    <citation type="journal article" date="2004" name="J. Mol. Microbiol. Biotechnol.">
        <title>The complete genome sequence of Bacillus licheniformis DSM13, an organism with great industrial potential.</title>
        <authorList>
            <person name="Veith B."/>
            <person name="Herzberg C."/>
            <person name="Steckel S."/>
            <person name="Feesche J."/>
            <person name="Maurer K.H."/>
            <person name="Ehrenreich P."/>
            <person name="Baeumer S."/>
            <person name="Henne A."/>
            <person name="Liesegang H."/>
            <person name="Merkl R."/>
            <person name="Ehrenreich A."/>
            <person name="Gottschalk G."/>
        </authorList>
    </citation>
    <scope>NUCLEOTIDE SEQUENCE [LARGE SCALE GENOMIC DNA]</scope>
    <source>
        <strain>ATCC 14580 / DSM 13 / JCM 2505 / CCUG 7422 / NBRC 12200 / NCIMB 9375 / NCTC 10341 / NRRL NRS-1264 / Gibson 46</strain>
    </source>
</reference>
<reference key="2">
    <citation type="journal article" date="2004" name="Genome Biol.">
        <title>Complete genome sequence of the industrial bacterium Bacillus licheniformis and comparisons with closely related Bacillus species.</title>
        <authorList>
            <person name="Rey M.W."/>
            <person name="Ramaiya P."/>
            <person name="Nelson B.A."/>
            <person name="Brody-Karpin S.D."/>
            <person name="Zaretsky E.J."/>
            <person name="Tang M."/>
            <person name="Lopez de Leon A."/>
            <person name="Xiang H."/>
            <person name="Gusti V."/>
            <person name="Clausen I.G."/>
            <person name="Olsen P.B."/>
            <person name="Rasmussen M.D."/>
            <person name="Andersen J.T."/>
            <person name="Joergensen P.L."/>
            <person name="Larsen T.S."/>
            <person name="Sorokin A."/>
            <person name="Bolotin A."/>
            <person name="Lapidus A."/>
            <person name="Galleron N."/>
            <person name="Ehrlich S.D."/>
            <person name="Berka R.M."/>
        </authorList>
    </citation>
    <scope>NUCLEOTIDE SEQUENCE [LARGE SCALE GENOMIC DNA]</scope>
    <source>
        <strain>ATCC 14580 / DSM 13 / JCM 2505 / CCUG 7422 / NBRC 12200 / NCIMB 9375 / NCTC 10341 / NRRL NRS-1264 / Gibson 46</strain>
    </source>
</reference>
<name>RL23_BACLD</name>
<evidence type="ECO:0000255" key="1">
    <source>
        <dbReference type="HAMAP-Rule" id="MF_01369"/>
    </source>
</evidence>
<evidence type="ECO:0000305" key="2"/>
<organism>
    <name type="scientific">Bacillus licheniformis (strain ATCC 14580 / DSM 13 / JCM 2505 / CCUG 7422 / NBRC 12200 / NCIMB 9375 / NCTC 10341 / NRRL NRS-1264 / Gibson 46)</name>
    <dbReference type="NCBI Taxonomy" id="279010"/>
    <lineage>
        <taxon>Bacteria</taxon>
        <taxon>Bacillati</taxon>
        <taxon>Bacillota</taxon>
        <taxon>Bacilli</taxon>
        <taxon>Bacillales</taxon>
        <taxon>Bacillaceae</taxon>
        <taxon>Bacillus</taxon>
    </lineage>
</organism>
<protein>
    <recommendedName>
        <fullName evidence="1">Large ribosomal subunit protein uL23</fullName>
    </recommendedName>
    <alternativeName>
        <fullName evidence="2">50S ribosomal protein L23</fullName>
    </alternativeName>
</protein>
<gene>
    <name evidence="1" type="primary">rplW</name>
    <name type="ordered locus">BLi00135</name>
    <name type="ordered locus">BL01050</name>
</gene>
<feature type="chain" id="PRO_0000272702" description="Large ribosomal subunit protein uL23">
    <location>
        <begin position="1"/>
        <end position="95"/>
    </location>
</feature>